<evidence type="ECO:0000250" key="1"/>
<evidence type="ECO:0000255" key="2"/>
<evidence type="ECO:0000255" key="3">
    <source>
        <dbReference type="PROSITE-ProRule" id="PRU00114"/>
    </source>
</evidence>
<evidence type="ECO:0000255" key="4">
    <source>
        <dbReference type="PROSITE-ProRule" id="PRU00316"/>
    </source>
</evidence>
<evidence type="ECO:0000256" key="5">
    <source>
        <dbReference type="SAM" id="MobiDB-lite"/>
    </source>
</evidence>
<evidence type="ECO:0000269" key="6">
    <source>
    </source>
</evidence>
<evidence type="ECO:0000269" key="7">
    <source>
    </source>
</evidence>
<evidence type="ECO:0000305" key="8"/>
<evidence type="ECO:0007829" key="9">
    <source>
        <dbReference type="PDB" id="5E4Q"/>
    </source>
</evidence>
<evidence type="ECO:0007829" key="10">
    <source>
        <dbReference type="PDB" id="5E5R"/>
    </source>
</evidence>
<evidence type="ECO:0007829" key="11">
    <source>
        <dbReference type="PDB" id="5I99"/>
    </source>
</evidence>
<dbReference type="EMBL" id="L01991">
    <property type="protein sequence ID" value="AAA17403.1"/>
    <property type="molecule type" value="mRNA"/>
</dbReference>
<dbReference type="EMBL" id="AC114423">
    <property type="status" value="NOT_ANNOTATED_CDS"/>
    <property type="molecule type" value="Genomic_DNA"/>
</dbReference>
<dbReference type="EMBL" id="AC153597">
    <property type="status" value="NOT_ANNOTATED_CDS"/>
    <property type="molecule type" value="Genomic_DNA"/>
</dbReference>
<dbReference type="EMBL" id="AC153600">
    <property type="status" value="NOT_ANNOTATED_CDS"/>
    <property type="molecule type" value="Genomic_DNA"/>
</dbReference>
<dbReference type="EMBL" id="AC155328">
    <property type="status" value="NOT_ANNOTATED_CDS"/>
    <property type="molecule type" value="Genomic_DNA"/>
</dbReference>
<dbReference type="EMBL" id="CH466523">
    <property type="protein sequence ID" value="EDK99385.1"/>
    <property type="molecule type" value="Genomic_DNA"/>
</dbReference>
<dbReference type="CCDS" id="CCDS39581.1"/>
<dbReference type="PIR" id="A53449">
    <property type="entry name" value="A53449"/>
</dbReference>
<dbReference type="RefSeq" id="NP_032805.2">
    <property type="nucleotide sequence ID" value="NM_008779.3"/>
</dbReference>
<dbReference type="RefSeq" id="XP_006505788.1">
    <property type="nucleotide sequence ID" value="XM_006505725.3"/>
</dbReference>
<dbReference type="RefSeq" id="XP_006505790.1">
    <property type="nucleotide sequence ID" value="XM_006505727.5"/>
</dbReference>
<dbReference type="RefSeq" id="XP_006505791.1">
    <property type="nucleotide sequence ID" value="XM_006505728.5"/>
</dbReference>
<dbReference type="RefSeq" id="XP_017176937.1">
    <property type="nucleotide sequence ID" value="XM_017321448.1"/>
</dbReference>
<dbReference type="RefSeq" id="XP_036021818.1">
    <property type="nucleotide sequence ID" value="XM_036165925.1"/>
</dbReference>
<dbReference type="PDB" id="5E4Q">
    <property type="method" value="X-ray"/>
    <property type="resolution" value="2.82 A"/>
    <property type="chains" value="A=604-900"/>
</dbReference>
<dbReference type="PDB" id="5E5R">
    <property type="method" value="X-ray"/>
    <property type="resolution" value="2.60 A"/>
    <property type="chains" value="B/D=124-316"/>
</dbReference>
<dbReference type="PDB" id="5I99">
    <property type="method" value="X-ray"/>
    <property type="resolution" value="2.40 A"/>
    <property type="chains" value="A=406-801"/>
</dbReference>
<dbReference type="PDBsum" id="5E4Q"/>
<dbReference type="PDBsum" id="5E5R"/>
<dbReference type="PDBsum" id="5I99"/>
<dbReference type="SMR" id="Q07409"/>
<dbReference type="BioGRID" id="202024">
    <property type="interactions" value="1"/>
</dbReference>
<dbReference type="FunCoup" id="Q07409">
    <property type="interactions" value="171"/>
</dbReference>
<dbReference type="STRING" id="10090.ENSMUSP00000145176"/>
<dbReference type="GlyConnect" id="2226">
    <property type="glycosylation" value="4 N-Linked glycans (3 sites)"/>
</dbReference>
<dbReference type="GlyCosmos" id="Q07409">
    <property type="glycosylation" value="11 sites, 4 glycans"/>
</dbReference>
<dbReference type="GlyGen" id="Q07409">
    <property type="glycosylation" value="11 sites, 13 N-linked glycans (11 sites)"/>
</dbReference>
<dbReference type="iPTMnet" id="Q07409"/>
<dbReference type="PhosphoSitePlus" id="Q07409"/>
<dbReference type="PaxDb" id="10090-ENSMUSP00000032159"/>
<dbReference type="PeptideAtlas" id="Q07409"/>
<dbReference type="ProteomicsDB" id="283660"/>
<dbReference type="Antibodypedia" id="1216">
    <property type="antibodies" value="162 antibodies from 24 providers"/>
</dbReference>
<dbReference type="DNASU" id="18488"/>
<dbReference type="Ensembl" id="ENSMUST00000032159.7">
    <property type="protein sequence ID" value="ENSMUSP00000032159.7"/>
    <property type="gene ID" value="ENSMUSG00000030075.11"/>
</dbReference>
<dbReference type="Ensembl" id="ENSMUST00000203619.3">
    <property type="protein sequence ID" value="ENSMUSP00000145176.2"/>
    <property type="gene ID" value="ENSMUSG00000030075.11"/>
</dbReference>
<dbReference type="GeneID" id="18488"/>
<dbReference type="KEGG" id="mmu:18488"/>
<dbReference type="UCSC" id="uc009dch.1">
    <property type="organism name" value="mouse"/>
</dbReference>
<dbReference type="AGR" id="MGI:99534"/>
<dbReference type="CTD" id="5067"/>
<dbReference type="MGI" id="MGI:99534">
    <property type="gene designation" value="Cntn3"/>
</dbReference>
<dbReference type="VEuPathDB" id="HostDB:ENSMUSG00000030075"/>
<dbReference type="eggNOG" id="KOG3513">
    <property type="taxonomic scope" value="Eukaryota"/>
</dbReference>
<dbReference type="GeneTree" id="ENSGT00940000160282"/>
<dbReference type="HOGENOM" id="CLU_005756_0_0_1"/>
<dbReference type="InParanoid" id="Q07409"/>
<dbReference type="OMA" id="HKLMGAR"/>
<dbReference type="OrthoDB" id="5982258at2759"/>
<dbReference type="PhylomeDB" id="Q07409"/>
<dbReference type="TreeFam" id="TF351103"/>
<dbReference type="Reactome" id="R-MMU-163125">
    <property type="pathway name" value="Post-translational modification: synthesis of GPI-anchored proteins"/>
</dbReference>
<dbReference type="BioGRID-ORCS" id="18488">
    <property type="hits" value="3 hits in 78 CRISPR screens"/>
</dbReference>
<dbReference type="CD-CODE" id="CE726F99">
    <property type="entry name" value="Postsynaptic density"/>
</dbReference>
<dbReference type="ChiTaRS" id="Cntn3">
    <property type="organism name" value="mouse"/>
</dbReference>
<dbReference type="PRO" id="PR:Q07409"/>
<dbReference type="Proteomes" id="UP000000589">
    <property type="component" value="Chromosome 6"/>
</dbReference>
<dbReference type="RNAct" id="Q07409">
    <property type="molecule type" value="protein"/>
</dbReference>
<dbReference type="Bgee" id="ENSMUSG00000030075">
    <property type="expression patterns" value="Expressed in epithelium of cochlear duct and 127 other cell types or tissues"/>
</dbReference>
<dbReference type="GO" id="GO:0005886">
    <property type="term" value="C:plasma membrane"/>
    <property type="evidence" value="ECO:0007669"/>
    <property type="project" value="UniProtKB-SubCell"/>
</dbReference>
<dbReference type="GO" id="GO:0098552">
    <property type="term" value="C:side of membrane"/>
    <property type="evidence" value="ECO:0007669"/>
    <property type="project" value="UniProtKB-KW"/>
</dbReference>
<dbReference type="GO" id="GO:0007155">
    <property type="term" value="P:cell adhesion"/>
    <property type="evidence" value="ECO:0007669"/>
    <property type="project" value="UniProtKB-KW"/>
</dbReference>
<dbReference type="CDD" id="cd00063">
    <property type="entry name" value="FN3"/>
    <property type="match status" value="4"/>
</dbReference>
<dbReference type="FunFam" id="2.60.40.10:FF:000035">
    <property type="entry name" value="Contactin 1"/>
    <property type="match status" value="1"/>
</dbReference>
<dbReference type="FunFam" id="2.60.40.10:FF:000044">
    <property type="entry name" value="Contactin 1"/>
    <property type="match status" value="1"/>
</dbReference>
<dbReference type="FunFam" id="2.60.40.10:FF:000047">
    <property type="entry name" value="Contactin 1"/>
    <property type="match status" value="1"/>
</dbReference>
<dbReference type="FunFam" id="2.60.40.10:FF:000052">
    <property type="entry name" value="Contactin 1"/>
    <property type="match status" value="1"/>
</dbReference>
<dbReference type="FunFam" id="2.60.40.10:FF:000054">
    <property type="entry name" value="Contactin 1"/>
    <property type="match status" value="1"/>
</dbReference>
<dbReference type="FunFam" id="2.60.40.10:FF:000064">
    <property type="entry name" value="Contactin 1"/>
    <property type="match status" value="1"/>
</dbReference>
<dbReference type="FunFam" id="2.60.40.10:FF:000273">
    <property type="entry name" value="contactin-3 isoform X1"/>
    <property type="match status" value="1"/>
</dbReference>
<dbReference type="FunFam" id="2.60.40.10:FF:000004">
    <property type="entry name" value="DCC isoform 1"/>
    <property type="match status" value="2"/>
</dbReference>
<dbReference type="FunFam" id="2.60.40.10:FF:000028">
    <property type="entry name" value="Neuronal cell adhesion molecule"/>
    <property type="match status" value="1"/>
</dbReference>
<dbReference type="Gene3D" id="2.60.40.10">
    <property type="entry name" value="Immunoglobulins"/>
    <property type="match status" value="10"/>
</dbReference>
<dbReference type="InterPro" id="IPR003961">
    <property type="entry name" value="FN3_dom"/>
</dbReference>
<dbReference type="InterPro" id="IPR036116">
    <property type="entry name" value="FN3_sf"/>
</dbReference>
<dbReference type="InterPro" id="IPR007110">
    <property type="entry name" value="Ig-like_dom"/>
</dbReference>
<dbReference type="InterPro" id="IPR036179">
    <property type="entry name" value="Ig-like_dom_sf"/>
</dbReference>
<dbReference type="InterPro" id="IPR013783">
    <property type="entry name" value="Ig-like_fold"/>
</dbReference>
<dbReference type="InterPro" id="IPR013098">
    <property type="entry name" value="Ig_I-set"/>
</dbReference>
<dbReference type="InterPro" id="IPR003599">
    <property type="entry name" value="Ig_sub"/>
</dbReference>
<dbReference type="InterPro" id="IPR003598">
    <property type="entry name" value="Ig_sub2"/>
</dbReference>
<dbReference type="PANTHER" id="PTHR44170:SF18">
    <property type="entry name" value="CONTACTIN 3B-RELATED"/>
    <property type="match status" value="1"/>
</dbReference>
<dbReference type="PANTHER" id="PTHR44170">
    <property type="entry name" value="PROTEIN SIDEKICK"/>
    <property type="match status" value="1"/>
</dbReference>
<dbReference type="Pfam" id="PF00041">
    <property type="entry name" value="fn3"/>
    <property type="match status" value="3"/>
</dbReference>
<dbReference type="Pfam" id="PF07679">
    <property type="entry name" value="I-set"/>
    <property type="match status" value="2"/>
</dbReference>
<dbReference type="Pfam" id="PF13927">
    <property type="entry name" value="Ig_3"/>
    <property type="match status" value="3"/>
</dbReference>
<dbReference type="SMART" id="SM00060">
    <property type="entry name" value="FN3"/>
    <property type="match status" value="4"/>
</dbReference>
<dbReference type="SMART" id="SM00409">
    <property type="entry name" value="IG"/>
    <property type="match status" value="6"/>
</dbReference>
<dbReference type="SMART" id="SM00408">
    <property type="entry name" value="IGc2"/>
    <property type="match status" value="6"/>
</dbReference>
<dbReference type="SUPFAM" id="SSF49265">
    <property type="entry name" value="Fibronectin type III"/>
    <property type="match status" value="2"/>
</dbReference>
<dbReference type="SUPFAM" id="SSF48726">
    <property type="entry name" value="Immunoglobulin"/>
    <property type="match status" value="6"/>
</dbReference>
<dbReference type="PROSITE" id="PS50853">
    <property type="entry name" value="FN3"/>
    <property type="match status" value="4"/>
</dbReference>
<dbReference type="PROSITE" id="PS50835">
    <property type="entry name" value="IG_LIKE"/>
    <property type="match status" value="6"/>
</dbReference>
<protein>
    <recommendedName>
        <fullName>Contactin-3</fullName>
    </recommendedName>
    <alternativeName>
        <fullName>Brain-derived immunoglobulin superfamily protein 1</fullName>
        <shortName>BIG-1</shortName>
    </alternativeName>
    <alternativeName>
        <fullName>Plasmacytoma-associated neuronal glycoprotein</fullName>
    </alternativeName>
</protein>
<proteinExistence type="evidence at protein level"/>
<feature type="signal peptide" evidence="2">
    <location>
        <begin position="1"/>
        <end position="19"/>
    </location>
</feature>
<feature type="chain" id="PRO_0000014707" description="Contactin-3">
    <location>
        <begin position="20"/>
        <end position="1002"/>
    </location>
</feature>
<feature type="propeptide" id="PRO_0000014708" description="Removed in mature form" evidence="2">
    <location>
        <begin position="1003"/>
        <end position="1028"/>
    </location>
</feature>
<feature type="domain" description="Ig-like C2-type 1">
    <location>
        <begin position="32"/>
        <end position="117"/>
    </location>
</feature>
<feature type="domain" description="Ig-like C2-type 2">
    <location>
        <begin position="122"/>
        <end position="209"/>
    </location>
</feature>
<feature type="domain" description="Ig-like C2-type 3">
    <location>
        <begin position="227"/>
        <end position="313"/>
    </location>
</feature>
<feature type="domain" description="Ig-like C2-type 4">
    <location>
        <begin position="318"/>
        <end position="402"/>
    </location>
</feature>
<feature type="domain" description="Ig-like C2-type 5">
    <location>
        <begin position="408"/>
        <end position="497"/>
    </location>
</feature>
<feature type="domain" description="Ig-like C2-type 6">
    <location>
        <begin position="499"/>
        <end position="593"/>
    </location>
</feature>
<feature type="domain" description="Fibronectin type-III 1" evidence="4">
    <location>
        <begin position="600"/>
        <end position="698"/>
    </location>
</feature>
<feature type="domain" description="Fibronectin type-III 2" evidence="4">
    <location>
        <begin position="703"/>
        <end position="800"/>
    </location>
</feature>
<feature type="domain" description="Fibronectin type-III 3" evidence="4">
    <location>
        <begin position="805"/>
        <end position="901"/>
    </location>
</feature>
<feature type="domain" description="Fibronectin type-III 4" evidence="4">
    <location>
        <begin position="902"/>
        <end position="998"/>
    </location>
</feature>
<feature type="region of interest" description="Disordered" evidence="5">
    <location>
        <begin position="684"/>
        <end position="714"/>
    </location>
</feature>
<feature type="lipid moiety-binding region" description="GPI-anchor amidated serine" evidence="2">
    <location>
        <position position="1002"/>
    </location>
</feature>
<feature type="glycosylation site" description="N-linked (GlcNAc...) asparagine" evidence="2">
    <location>
        <position position="65"/>
    </location>
</feature>
<feature type="glycosylation site" description="N-linked (GlcNAc...) asparagine" evidence="2">
    <location>
        <position position="193"/>
    </location>
</feature>
<feature type="glycosylation site" description="N-linked (GlcNAc...) asparagine" evidence="2">
    <location>
        <position position="377"/>
    </location>
</feature>
<feature type="glycosylation site" description="N-linked (GlcNAc...) asparagine" evidence="2">
    <location>
        <position position="468"/>
    </location>
</feature>
<feature type="glycosylation site" description="N-linked (GlcNAc...) asparagine" evidence="2">
    <location>
        <position position="489"/>
    </location>
</feature>
<feature type="glycosylation site" description="N-linked (GlcNAc...) asparagine" evidence="2">
    <location>
        <position position="765"/>
    </location>
</feature>
<feature type="glycosylation site" description="N-linked (GlcNAc...) asparagine" evidence="2">
    <location>
        <position position="860"/>
    </location>
</feature>
<feature type="glycosylation site" description="N-linked (GlcNAc...) asparagine" evidence="2">
    <location>
        <position position="895"/>
    </location>
</feature>
<feature type="glycosylation site" description="N-linked (GlcNAc...) asparagine" evidence="2">
    <location>
        <position position="913"/>
    </location>
</feature>
<feature type="glycosylation site" description="N-linked (GlcNAc...) asparagine" evidence="2">
    <location>
        <position position="931"/>
    </location>
</feature>
<feature type="glycosylation site" description="N-linked (GlcNAc...) asparagine" evidence="2">
    <location>
        <position position="956"/>
    </location>
</feature>
<feature type="disulfide bond" evidence="3">
    <location>
        <begin position="50"/>
        <end position="100"/>
    </location>
</feature>
<feature type="disulfide bond" evidence="3">
    <location>
        <begin position="144"/>
        <end position="196"/>
    </location>
</feature>
<feature type="disulfide bond" evidence="3">
    <location>
        <begin position="249"/>
        <end position="297"/>
    </location>
</feature>
<feature type="disulfide bond" evidence="3">
    <location>
        <begin position="339"/>
        <end position="386"/>
    </location>
</feature>
<feature type="disulfide bond" evidence="3">
    <location>
        <begin position="431"/>
        <end position="479"/>
    </location>
</feature>
<feature type="disulfide bond" evidence="3">
    <location>
        <begin position="521"/>
        <end position="577"/>
    </location>
</feature>
<feature type="sequence conflict" description="In Ref. 1; AAA17403." evidence="8" ref="1">
    <original>F</original>
    <variation>L</variation>
    <location>
        <position position="173"/>
    </location>
</feature>
<feature type="sequence conflict" description="In Ref. 1; AAA17403." evidence="8" ref="1">
    <original>C</original>
    <variation>G</variation>
    <location>
        <position position="297"/>
    </location>
</feature>
<feature type="strand" evidence="10">
    <location>
        <begin position="132"/>
        <end position="134"/>
    </location>
</feature>
<feature type="strand" evidence="10">
    <location>
        <begin position="140"/>
        <end position="142"/>
    </location>
</feature>
<feature type="strand" evidence="10">
    <location>
        <begin position="153"/>
        <end position="161"/>
    </location>
</feature>
<feature type="strand" evidence="10">
    <location>
        <begin position="172"/>
        <end position="174"/>
    </location>
</feature>
<feature type="turn" evidence="10">
    <location>
        <begin position="176"/>
        <end position="178"/>
    </location>
</feature>
<feature type="strand" evidence="10">
    <location>
        <begin position="181"/>
        <end position="185"/>
    </location>
</feature>
<feature type="helix" evidence="10">
    <location>
        <begin position="188"/>
        <end position="190"/>
    </location>
</feature>
<feature type="strand" evidence="10">
    <location>
        <begin position="192"/>
        <end position="200"/>
    </location>
</feature>
<feature type="strand" evidence="10">
    <location>
        <begin position="206"/>
        <end position="208"/>
    </location>
</feature>
<feature type="strand" evidence="10">
    <location>
        <begin position="212"/>
        <end position="216"/>
    </location>
</feature>
<feature type="strand" evidence="10">
    <location>
        <begin position="225"/>
        <end position="232"/>
    </location>
</feature>
<feature type="strand" evidence="10">
    <location>
        <begin position="235"/>
        <end position="240"/>
    </location>
</feature>
<feature type="strand" evidence="10">
    <location>
        <begin position="245"/>
        <end position="255"/>
    </location>
</feature>
<feature type="strand" evidence="10">
    <location>
        <begin position="258"/>
        <end position="263"/>
    </location>
</feature>
<feature type="strand" evidence="10">
    <location>
        <begin position="273"/>
        <end position="276"/>
    </location>
</feature>
<feature type="helix" evidence="10">
    <location>
        <begin position="277"/>
        <end position="279"/>
    </location>
</feature>
<feature type="strand" evidence="10">
    <location>
        <begin position="281"/>
        <end position="284"/>
    </location>
</feature>
<feature type="helix" evidence="10">
    <location>
        <begin position="289"/>
        <end position="291"/>
    </location>
</feature>
<feature type="strand" evidence="10">
    <location>
        <begin position="293"/>
        <end position="301"/>
    </location>
</feature>
<feature type="strand" evidence="10">
    <location>
        <begin position="304"/>
        <end position="315"/>
    </location>
</feature>
<feature type="strand" evidence="11">
    <location>
        <begin position="406"/>
        <end position="409"/>
    </location>
</feature>
<feature type="strand" evidence="11">
    <location>
        <begin position="411"/>
        <end position="413"/>
    </location>
</feature>
<feature type="strand" evidence="11">
    <location>
        <begin position="417"/>
        <end position="422"/>
    </location>
</feature>
<feature type="strand" evidence="11">
    <location>
        <begin position="427"/>
        <end position="429"/>
    </location>
</feature>
<feature type="strand" evidence="11">
    <location>
        <begin position="434"/>
        <end position="437"/>
    </location>
</feature>
<feature type="strand" evidence="11">
    <location>
        <begin position="440"/>
        <end position="445"/>
    </location>
</feature>
<feature type="strand" evidence="11">
    <location>
        <begin position="454"/>
        <end position="458"/>
    </location>
</feature>
<feature type="strand" evidence="11">
    <location>
        <begin position="464"/>
        <end position="466"/>
    </location>
</feature>
<feature type="helix" evidence="11">
    <location>
        <begin position="471"/>
        <end position="473"/>
    </location>
</feature>
<feature type="strand" evidence="11">
    <location>
        <begin position="475"/>
        <end position="483"/>
    </location>
</feature>
<feature type="strand" evidence="11">
    <location>
        <begin position="486"/>
        <end position="497"/>
    </location>
</feature>
<feature type="strand" evidence="11">
    <location>
        <begin position="501"/>
        <end position="504"/>
    </location>
</feature>
<feature type="strand" evidence="11">
    <location>
        <begin position="509"/>
        <end position="512"/>
    </location>
</feature>
<feature type="strand" evidence="11">
    <location>
        <begin position="517"/>
        <end position="519"/>
    </location>
</feature>
<feature type="strand" evidence="11">
    <location>
        <begin position="522"/>
        <end position="524"/>
    </location>
</feature>
<feature type="strand" evidence="11">
    <location>
        <begin position="532"/>
        <end position="537"/>
    </location>
</feature>
<feature type="strand" evidence="11">
    <location>
        <begin position="540"/>
        <end position="542"/>
    </location>
</feature>
<feature type="helix" evidence="11">
    <location>
        <begin position="545"/>
        <end position="547"/>
    </location>
</feature>
<feature type="strand" evidence="11">
    <location>
        <begin position="550"/>
        <end position="553"/>
    </location>
</feature>
<feature type="strand" evidence="11">
    <location>
        <begin position="562"/>
        <end position="564"/>
    </location>
</feature>
<feature type="helix" evidence="11">
    <location>
        <begin position="569"/>
        <end position="571"/>
    </location>
</feature>
<feature type="strand" evidence="11">
    <location>
        <begin position="573"/>
        <end position="581"/>
    </location>
</feature>
<feature type="strand" evidence="11">
    <location>
        <begin position="584"/>
        <end position="595"/>
    </location>
</feature>
<feature type="strand" evidence="11">
    <location>
        <begin position="602"/>
        <end position="608"/>
    </location>
</feature>
<feature type="strand" evidence="11">
    <location>
        <begin position="614"/>
        <end position="619"/>
    </location>
</feature>
<feature type="strand" evidence="11">
    <location>
        <begin position="628"/>
        <end position="636"/>
    </location>
</feature>
<feature type="strand" evidence="11">
    <location>
        <begin position="638"/>
        <end position="642"/>
    </location>
</feature>
<feature type="strand" evidence="11">
    <location>
        <begin position="647"/>
        <end position="654"/>
    </location>
</feature>
<feature type="strand" evidence="11">
    <location>
        <begin position="659"/>
        <end position="664"/>
    </location>
</feature>
<feature type="strand" evidence="11">
    <location>
        <begin position="670"/>
        <end position="679"/>
    </location>
</feature>
<feature type="strand" evidence="11">
    <location>
        <begin position="716"/>
        <end position="720"/>
    </location>
</feature>
<feature type="helix" evidence="11">
    <location>
        <begin position="726"/>
        <end position="728"/>
    </location>
</feature>
<feature type="strand" evidence="11">
    <location>
        <begin position="731"/>
        <end position="733"/>
    </location>
</feature>
<feature type="strand" evidence="11">
    <location>
        <begin position="735"/>
        <end position="742"/>
    </location>
</feature>
<feature type="strand" evidence="11">
    <location>
        <begin position="749"/>
        <end position="753"/>
    </location>
</feature>
<feature type="strand" evidence="11">
    <location>
        <begin position="760"/>
        <end position="765"/>
    </location>
</feature>
<feature type="strand" evidence="11">
    <location>
        <begin position="773"/>
        <end position="782"/>
    </location>
</feature>
<feature type="strand" evidence="11">
    <location>
        <begin position="785"/>
        <end position="789"/>
    </location>
</feature>
<feature type="strand" evidence="11">
    <location>
        <begin position="793"/>
        <end position="796"/>
    </location>
</feature>
<feature type="strand" evidence="9">
    <location>
        <begin position="810"/>
        <end position="813"/>
    </location>
</feature>
<feature type="strand" evidence="9">
    <location>
        <begin position="815"/>
        <end position="817"/>
    </location>
</feature>
<feature type="strand" evidence="9">
    <location>
        <begin position="819"/>
        <end position="822"/>
    </location>
</feature>
<feature type="helix" evidence="9">
    <location>
        <begin position="830"/>
        <end position="832"/>
    </location>
</feature>
<feature type="strand" evidence="9">
    <location>
        <begin position="837"/>
        <end position="843"/>
    </location>
</feature>
<feature type="strand" evidence="9">
    <location>
        <begin position="853"/>
        <end position="857"/>
    </location>
</feature>
<feature type="strand" evidence="9">
    <location>
        <begin position="863"/>
        <end position="866"/>
    </location>
</feature>
<feature type="strand" evidence="9">
    <location>
        <begin position="874"/>
        <end position="883"/>
    </location>
</feature>
<feature type="strand" evidence="9">
    <location>
        <begin position="894"/>
        <end position="897"/>
    </location>
</feature>
<sequence>MMLSWKQLILLSFIGCLAGELLLQGPVFIKEPSNSIFPVDSEDKKITLNCEARGNPSPHYRWQLNGSDIDTSLDHRYKLNGGNLIVINPNRNWDTGSYQCFATNSLGTIVSREAKLQFAYLENFKTRMRSTVSVREGQGVVLLCGPPPHSGELSYAWVFNEYPSFVEEDSRRFVSQETGHLYIAKVEPSDVGNYTCVVTSTVTNTRVLGSPTPLVLRSDGVMGEYEPKIEVQFPETLPAAKGSTVRLECFALGNPVPQINWRRSDGMPFPNKIKLRKFNGMLEIQNFQQEDTGSYECIAENSRGKNVARGRLTYYAKPYWLQLLRDVEIAVEDSLYWECRASGKPKPSYRWLKNGDALVLEERIQIENGALTITNLNVTDSGMFQCIAENKHGLIYSSAELKVVASAPDFSRNPMKKMVQVQVGSLVILDCKPRASPRALSFWKKGDMMVREQARVSFLNDGGLKIMNVTKADAGTYTCTAENQFGKANGTTHLVVTEPTRIILAPSNMDVAVGESVILPCQVQHDPLLDIMFAWYFNGALTDFKKDGSHFEKVGGSSSGDLMIRNIQLKHSGKYVCMVQTGVDSVSSAAELIVRGSPGPPENVKVDEITDTTAQLSWTEGTDSHSPVISYAVQARTPFSVGWQSVRTVPEVIDGKTHTATVVELNPWVEYEFRIVASNKIGGGEPSLPSEKVRTEEAAPEIAPSEVSGGGGSRSELVITWDPVPEELQNGGGFGYVVAFRPLGVTTWIQTVVTSPDNPRYVFRNESIVPFSPYEVKVGVYNNKGEGPFSPVTTVFSAEEEPTVAPSHISAHSLSSSEIEVSWNTIPWKLSNGHLLGYEVRYWNNGGEEESSRKVKVAGNQTSAVLRGLKSNLAYYTAVRAYNSAGAGPFSATVNATTKKTPPSQPPGNVVWNATDTKVLLNWEQVKAMENESEVTGYKVFYRTSSQNNVHVLNTNKTSAELLLPIKEDYIIEVKATTDGGDGTSSEQIRIPRITSMDARGSTSAISNIHPLSGYMSVLLFFIVNALW</sequence>
<comment type="function">
    <text evidence="1">Contactins mediate cell surface interactions during nervous system development. Has some neurite outgrowth-promoting activity (By similarity).</text>
</comment>
<comment type="subunit">
    <text evidence="6">Interacts with PTPRG.</text>
</comment>
<comment type="subcellular location">
    <subcellularLocation>
        <location evidence="1">Cell membrane</location>
        <topology evidence="1">Lipid-anchor</topology>
        <topology evidence="1">GPI-anchor</topology>
    </subcellularLocation>
</comment>
<comment type="tissue specificity">
    <text evidence="7">Specifically expressed in brain. Ectopically expressed in tumors expressing endogenous intracisternal A-type particles (IAPs).</text>
</comment>
<comment type="similarity">
    <text evidence="8">Belongs to the immunoglobulin superfamily. Contactin family.</text>
</comment>
<name>CNTN3_MOUSE</name>
<reference key="1">
    <citation type="journal article" date="1994" name="Proc. Natl. Acad. Sci. U.S.A.">
        <title>PANG, a gene encoding a neuronal glycoprotein, is ectopically activated by intracisternal A-type particle long terminal repeats in murine plasmacytomas.</title>
        <authorList>
            <person name="Connelly M.A."/>
            <person name="Grady R.C."/>
            <person name="Mushinski J.F."/>
            <person name="Marcu K.B."/>
        </authorList>
    </citation>
    <scope>NUCLEOTIDE SEQUENCE [MRNA]</scope>
    <scope>TISSUE SPECIFICITY</scope>
    <source>
        <tissue>Plasmacytoma</tissue>
    </source>
</reference>
<reference key="2">
    <citation type="journal article" date="2009" name="PLoS Biol.">
        <title>Lineage-specific biology revealed by a finished genome assembly of the mouse.</title>
        <authorList>
            <person name="Church D.M."/>
            <person name="Goodstadt L."/>
            <person name="Hillier L.W."/>
            <person name="Zody M.C."/>
            <person name="Goldstein S."/>
            <person name="She X."/>
            <person name="Bult C.J."/>
            <person name="Agarwala R."/>
            <person name="Cherry J.L."/>
            <person name="DiCuccio M."/>
            <person name="Hlavina W."/>
            <person name="Kapustin Y."/>
            <person name="Meric P."/>
            <person name="Maglott D."/>
            <person name="Birtle Z."/>
            <person name="Marques A.C."/>
            <person name="Graves T."/>
            <person name="Zhou S."/>
            <person name="Teague B."/>
            <person name="Potamousis K."/>
            <person name="Churas C."/>
            <person name="Place M."/>
            <person name="Herschleb J."/>
            <person name="Runnheim R."/>
            <person name="Forrest D."/>
            <person name="Amos-Landgraf J."/>
            <person name="Schwartz D.C."/>
            <person name="Cheng Z."/>
            <person name="Lindblad-Toh K."/>
            <person name="Eichler E.E."/>
            <person name="Ponting C.P."/>
        </authorList>
    </citation>
    <scope>NUCLEOTIDE SEQUENCE [LARGE SCALE GENOMIC DNA]</scope>
    <source>
        <strain>C57BL/6J</strain>
    </source>
</reference>
<reference key="3">
    <citation type="submission" date="2005-07" db="EMBL/GenBank/DDBJ databases">
        <authorList>
            <person name="Mural R.J."/>
            <person name="Adams M.D."/>
            <person name="Myers E.W."/>
            <person name="Smith H.O."/>
            <person name="Venter J.C."/>
        </authorList>
    </citation>
    <scope>NUCLEOTIDE SEQUENCE [LARGE SCALE GENOMIC DNA]</scope>
</reference>
<reference key="4">
    <citation type="journal article" date="2010" name="Cell">
        <title>A tissue-specific atlas of mouse protein phosphorylation and expression.</title>
        <authorList>
            <person name="Huttlin E.L."/>
            <person name="Jedrychowski M.P."/>
            <person name="Elias J.E."/>
            <person name="Goswami T."/>
            <person name="Rad R."/>
            <person name="Beausoleil S.A."/>
            <person name="Villen J."/>
            <person name="Haas W."/>
            <person name="Sowa M.E."/>
            <person name="Gygi S.P."/>
        </authorList>
    </citation>
    <scope>IDENTIFICATION BY MASS SPECTROMETRY [LARGE SCALE ANALYSIS]</scope>
    <source>
        <tissue>Brain</tissue>
    </source>
</reference>
<reference key="5">
    <citation type="journal article" date="2010" name="Proc. Natl. Acad. Sci. U.S.A.">
        <title>The protein tyrosine phosphatases PTPRZ and PTPRG bind to distinct members of the contactin family of neural recognition molecules.</title>
        <authorList>
            <person name="Bouyain S."/>
            <person name="Watkins D.J."/>
        </authorList>
    </citation>
    <scope>INTERACTION WITH PTPRG</scope>
</reference>
<accession>Q07409</accession>
<accession>G5E878</accession>
<gene>
    <name type="primary">Cntn3</name>
    <name type="synonym">Pang</name>
    <name type="synonym">Pcs</name>
</gene>
<organism>
    <name type="scientific">Mus musculus</name>
    <name type="common">Mouse</name>
    <dbReference type="NCBI Taxonomy" id="10090"/>
    <lineage>
        <taxon>Eukaryota</taxon>
        <taxon>Metazoa</taxon>
        <taxon>Chordata</taxon>
        <taxon>Craniata</taxon>
        <taxon>Vertebrata</taxon>
        <taxon>Euteleostomi</taxon>
        <taxon>Mammalia</taxon>
        <taxon>Eutheria</taxon>
        <taxon>Euarchontoglires</taxon>
        <taxon>Glires</taxon>
        <taxon>Rodentia</taxon>
        <taxon>Myomorpha</taxon>
        <taxon>Muroidea</taxon>
        <taxon>Muridae</taxon>
        <taxon>Murinae</taxon>
        <taxon>Mus</taxon>
        <taxon>Mus</taxon>
    </lineage>
</organism>
<keyword id="KW-0002">3D-structure</keyword>
<keyword id="KW-0130">Cell adhesion</keyword>
<keyword id="KW-1003">Cell membrane</keyword>
<keyword id="KW-1015">Disulfide bond</keyword>
<keyword id="KW-0325">Glycoprotein</keyword>
<keyword id="KW-0336">GPI-anchor</keyword>
<keyword id="KW-0393">Immunoglobulin domain</keyword>
<keyword id="KW-0449">Lipoprotein</keyword>
<keyword id="KW-0472">Membrane</keyword>
<keyword id="KW-1185">Reference proteome</keyword>
<keyword id="KW-0677">Repeat</keyword>
<keyword id="KW-0732">Signal</keyword>